<keyword id="KW-0963">Cytoplasm</keyword>
<keyword id="KW-0448">Lipopolysaccharide biosynthesis</keyword>
<keyword id="KW-0548">Nucleotidyltransferase</keyword>
<keyword id="KW-0808">Transferase</keyword>
<organism>
    <name type="scientific">Aeromonas salmonicida (strain A449)</name>
    <dbReference type="NCBI Taxonomy" id="382245"/>
    <lineage>
        <taxon>Bacteria</taxon>
        <taxon>Pseudomonadati</taxon>
        <taxon>Pseudomonadota</taxon>
        <taxon>Gammaproteobacteria</taxon>
        <taxon>Aeromonadales</taxon>
        <taxon>Aeromonadaceae</taxon>
        <taxon>Aeromonas</taxon>
    </lineage>
</organism>
<sequence>MSFVVVIPARYASTRLPGKPLADIHGKPMVQHVVEKALQSGADRVIVATDDERVHSALASFAEQAGVEVCMTSQDHQSGTERLAEVCRHYGFSADTIVVNVQGDEPLIPPAIIRQVADNLAAASAPMATLSVPIQDAEEAFNPNAVKVVTDKEGYALYFSRACIPWDRDRFAASDRAAGSHEQIGDHYQRHIGIYAYRAGFIQRYVDWAPSVLEQVEALEQLRVLWYGEKIHVAQALQAPPVGVDTQADLDKVRALLAN</sequence>
<dbReference type="EC" id="2.7.7.38" evidence="1"/>
<dbReference type="EMBL" id="CP000644">
    <property type="protein sequence ID" value="ABO89642.1"/>
    <property type="molecule type" value="Genomic_DNA"/>
</dbReference>
<dbReference type="RefSeq" id="WP_005320083.1">
    <property type="nucleotide sequence ID" value="NC_009348.1"/>
</dbReference>
<dbReference type="SMR" id="A4SL70"/>
<dbReference type="STRING" id="29491.GCA_000820065_03957"/>
<dbReference type="KEGG" id="asa:ASA_1554"/>
<dbReference type="eggNOG" id="COG1212">
    <property type="taxonomic scope" value="Bacteria"/>
</dbReference>
<dbReference type="HOGENOM" id="CLU_065038_1_0_6"/>
<dbReference type="UniPathway" id="UPA00030"/>
<dbReference type="UniPathway" id="UPA00358">
    <property type="reaction ID" value="UER00476"/>
</dbReference>
<dbReference type="Proteomes" id="UP000000225">
    <property type="component" value="Chromosome"/>
</dbReference>
<dbReference type="GO" id="GO:0005829">
    <property type="term" value="C:cytosol"/>
    <property type="evidence" value="ECO:0007669"/>
    <property type="project" value="TreeGrafter"/>
</dbReference>
<dbReference type="GO" id="GO:0008690">
    <property type="term" value="F:3-deoxy-manno-octulosonate cytidylyltransferase activity"/>
    <property type="evidence" value="ECO:0007669"/>
    <property type="project" value="UniProtKB-UniRule"/>
</dbReference>
<dbReference type="GO" id="GO:0033468">
    <property type="term" value="P:CMP-keto-3-deoxy-D-manno-octulosonic acid biosynthetic process"/>
    <property type="evidence" value="ECO:0007669"/>
    <property type="project" value="UniProtKB-UniRule"/>
</dbReference>
<dbReference type="GO" id="GO:0009103">
    <property type="term" value="P:lipopolysaccharide biosynthetic process"/>
    <property type="evidence" value="ECO:0007669"/>
    <property type="project" value="UniProtKB-UniRule"/>
</dbReference>
<dbReference type="CDD" id="cd02517">
    <property type="entry name" value="CMP-KDO-Synthetase"/>
    <property type="match status" value="1"/>
</dbReference>
<dbReference type="FunFam" id="3.90.550.10:FF:000011">
    <property type="entry name" value="3-deoxy-manno-octulosonate cytidylyltransferase"/>
    <property type="match status" value="1"/>
</dbReference>
<dbReference type="Gene3D" id="3.90.550.10">
    <property type="entry name" value="Spore Coat Polysaccharide Biosynthesis Protein SpsA, Chain A"/>
    <property type="match status" value="1"/>
</dbReference>
<dbReference type="HAMAP" id="MF_00057">
    <property type="entry name" value="KdsB"/>
    <property type="match status" value="1"/>
</dbReference>
<dbReference type="InterPro" id="IPR003329">
    <property type="entry name" value="Cytidylyl_trans"/>
</dbReference>
<dbReference type="InterPro" id="IPR004528">
    <property type="entry name" value="KdsB"/>
</dbReference>
<dbReference type="InterPro" id="IPR029044">
    <property type="entry name" value="Nucleotide-diphossugar_trans"/>
</dbReference>
<dbReference type="NCBIfam" id="TIGR00466">
    <property type="entry name" value="kdsB"/>
    <property type="match status" value="1"/>
</dbReference>
<dbReference type="NCBIfam" id="NF003950">
    <property type="entry name" value="PRK05450.1-3"/>
    <property type="match status" value="1"/>
</dbReference>
<dbReference type="NCBIfam" id="NF003952">
    <property type="entry name" value="PRK05450.1-5"/>
    <property type="match status" value="1"/>
</dbReference>
<dbReference type="NCBIfam" id="NF009905">
    <property type="entry name" value="PRK13368.1"/>
    <property type="match status" value="1"/>
</dbReference>
<dbReference type="PANTHER" id="PTHR42866">
    <property type="entry name" value="3-DEOXY-MANNO-OCTULOSONATE CYTIDYLYLTRANSFERASE"/>
    <property type="match status" value="1"/>
</dbReference>
<dbReference type="PANTHER" id="PTHR42866:SF2">
    <property type="entry name" value="3-DEOXY-MANNO-OCTULOSONATE CYTIDYLYLTRANSFERASE, MITOCHONDRIAL"/>
    <property type="match status" value="1"/>
</dbReference>
<dbReference type="Pfam" id="PF02348">
    <property type="entry name" value="CTP_transf_3"/>
    <property type="match status" value="1"/>
</dbReference>
<dbReference type="SUPFAM" id="SSF53448">
    <property type="entry name" value="Nucleotide-diphospho-sugar transferases"/>
    <property type="match status" value="1"/>
</dbReference>
<comment type="function">
    <text evidence="1">Activates KDO (a required 8-carbon sugar) for incorporation into bacterial lipopolysaccharide in Gram-negative bacteria.</text>
</comment>
<comment type="catalytic activity">
    <reaction evidence="1">
        <text>3-deoxy-alpha-D-manno-oct-2-ulosonate + CTP = CMP-3-deoxy-beta-D-manno-octulosonate + diphosphate</text>
        <dbReference type="Rhea" id="RHEA:23448"/>
        <dbReference type="ChEBI" id="CHEBI:33019"/>
        <dbReference type="ChEBI" id="CHEBI:37563"/>
        <dbReference type="ChEBI" id="CHEBI:85986"/>
        <dbReference type="ChEBI" id="CHEBI:85987"/>
        <dbReference type="EC" id="2.7.7.38"/>
    </reaction>
</comment>
<comment type="pathway">
    <text evidence="1">Nucleotide-sugar biosynthesis; CMP-3-deoxy-D-manno-octulosonate biosynthesis; CMP-3-deoxy-D-manno-octulosonate from 3-deoxy-D-manno-octulosonate and CTP: step 1/1.</text>
</comment>
<comment type="pathway">
    <text evidence="1">Bacterial outer membrane biogenesis; lipopolysaccharide biosynthesis.</text>
</comment>
<comment type="subcellular location">
    <subcellularLocation>
        <location evidence="1">Cytoplasm</location>
    </subcellularLocation>
</comment>
<comment type="similarity">
    <text evidence="1">Belongs to the KdsB family.</text>
</comment>
<gene>
    <name evidence="1" type="primary">kdsB</name>
    <name type="ordered locus">ASA_1554</name>
</gene>
<proteinExistence type="inferred from homology"/>
<accession>A4SL70</accession>
<feature type="chain" id="PRO_0000369992" description="3-deoxy-manno-octulosonate cytidylyltransferase">
    <location>
        <begin position="1"/>
        <end position="259"/>
    </location>
</feature>
<protein>
    <recommendedName>
        <fullName evidence="1">3-deoxy-manno-octulosonate cytidylyltransferase</fullName>
        <ecNumber evidence="1">2.7.7.38</ecNumber>
    </recommendedName>
    <alternativeName>
        <fullName evidence="1">CMP-2-keto-3-deoxyoctulosonic acid synthase</fullName>
        <shortName evidence="1">CKS</shortName>
        <shortName evidence="1">CMP-KDO synthase</shortName>
    </alternativeName>
</protein>
<name>KDSB_AERS4</name>
<reference key="1">
    <citation type="journal article" date="2008" name="BMC Genomics">
        <title>The genome of Aeromonas salmonicida subsp. salmonicida A449: insights into the evolution of a fish pathogen.</title>
        <authorList>
            <person name="Reith M.E."/>
            <person name="Singh R.K."/>
            <person name="Curtis B."/>
            <person name="Boyd J.M."/>
            <person name="Bouevitch A."/>
            <person name="Kimball J."/>
            <person name="Munholland J."/>
            <person name="Murphy C."/>
            <person name="Sarty D."/>
            <person name="Williams J."/>
            <person name="Nash J.H."/>
            <person name="Johnson S.C."/>
            <person name="Brown L.L."/>
        </authorList>
    </citation>
    <scope>NUCLEOTIDE SEQUENCE [LARGE SCALE GENOMIC DNA]</scope>
    <source>
        <strain>A449</strain>
    </source>
</reference>
<evidence type="ECO:0000255" key="1">
    <source>
        <dbReference type="HAMAP-Rule" id="MF_00057"/>
    </source>
</evidence>